<protein>
    <recommendedName>
        <fullName evidence="1">2,3,4,5-tetrahydropyridine-2,6-dicarboxylate N-succinyltransferase</fullName>
        <ecNumber evidence="1">2.3.1.117</ecNumber>
    </recommendedName>
    <alternativeName>
        <fullName evidence="1">Tetrahydrodipicolinate N-succinyltransferase</fullName>
        <shortName evidence="1">THDP succinyltransferase</shortName>
        <shortName evidence="1">THP succinyltransferase</shortName>
        <shortName evidence="1">Tetrahydropicolinate succinylase</shortName>
    </alternativeName>
</protein>
<evidence type="ECO:0000255" key="1">
    <source>
        <dbReference type="HAMAP-Rule" id="MF_00811"/>
    </source>
</evidence>
<proteinExistence type="inferred from homology"/>
<organism>
    <name type="scientific">Citrobacter koseri (strain ATCC BAA-895 / CDC 4225-83 / SGSC4696)</name>
    <dbReference type="NCBI Taxonomy" id="290338"/>
    <lineage>
        <taxon>Bacteria</taxon>
        <taxon>Pseudomonadati</taxon>
        <taxon>Pseudomonadota</taxon>
        <taxon>Gammaproteobacteria</taxon>
        <taxon>Enterobacterales</taxon>
        <taxon>Enterobacteriaceae</taxon>
        <taxon>Citrobacter</taxon>
    </lineage>
</organism>
<comment type="catalytic activity">
    <reaction evidence="1">
        <text>(S)-2,3,4,5-tetrahydrodipicolinate + succinyl-CoA + H2O = (S)-2-succinylamino-6-oxoheptanedioate + CoA</text>
        <dbReference type="Rhea" id="RHEA:17325"/>
        <dbReference type="ChEBI" id="CHEBI:15377"/>
        <dbReference type="ChEBI" id="CHEBI:15685"/>
        <dbReference type="ChEBI" id="CHEBI:16845"/>
        <dbReference type="ChEBI" id="CHEBI:57287"/>
        <dbReference type="ChEBI" id="CHEBI:57292"/>
        <dbReference type="EC" id="2.3.1.117"/>
    </reaction>
</comment>
<comment type="pathway">
    <text evidence="1">Amino-acid biosynthesis; L-lysine biosynthesis via DAP pathway; LL-2,6-diaminopimelate from (S)-tetrahydrodipicolinate (succinylase route): step 1/3.</text>
</comment>
<comment type="subunit">
    <text evidence="1">Homotrimer.</text>
</comment>
<comment type="subcellular location">
    <subcellularLocation>
        <location evidence="1">Cytoplasm</location>
    </subcellularLocation>
</comment>
<comment type="similarity">
    <text evidence="1">Belongs to the transferase hexapeptide repeat family.</text>
</comment>
<name>DAPD_CITK8</name>
<reference key="1">
    <citation type="submission" date="2007-08" db="EMBL/GenBank/DDBJ databases">
        <authorList>
            <consortium name="The Citrobacter koseri Genome Sequencing Project"/>
            <person name="McClelland M."/>
            <person name="Sanderson E.K."/>
            <person name="Porwollik S."/>
            <person name="Spieth J."/>
            <person name="Clifton W.S."/>
            <person name="Latreille P."/>
            <person name="Courtney L."/>
            <person name="Wang C."/>
            <person name="Pepin K."/>
            <person name="Bhonagiri V."/>
            <person name="Nash W."/>
            <person name="Johnson M."/>
            <person name="Thiruvilangam P."/>
            <person name="Wilson R."/>
        </authorList>
    </citation>
    <scope>NUCLEOTIDE SEQUENCE [LARGE SCALE GENOMIC DNA]</scope>
    <source>
        <strain>ATCC BAA-895 / CDC 4225-83 / SGSC4696</strain>
    </source>
</reference>
<accession>A8ALC4</accession>
<feature type="chain" id="PRO_1000047135" description="2,3,4,5-tetrahydropyridine-2,6-dicarboxylate N-succinyltransferase">
    <location>
        <begin position="1"/>
        <end position="274"/>
    </location>
</feature>
<feature type="binding site" evidence="1">
    <location>
        <position position="104"/>
    </location>
    <ligand>
        <name>substrate</name>
    </ligand>
</feature>
<feature type="binding site" evidence="1">
    <location>
        <position position="141"/>
    </location>
    <ligand>
        <name>substrate</name>
    </ligand>
</feature>
<sequence>MQQLQNVIESAFERRADITPANVDTVTREAVNQVISLLDSGALRVAEKIDGQWVTHQWLKKAVLLSFRINDNQVIDGAESRYFDKVPMKFADYDEARFQKEGFRVVPPAAVRQGAFIARNTVLMPSYVNIGAFVDEGTMVDTWATVGSCAQIGKNVHLSGGVGIGGVLEPLQANPTIIEDNCFIGARSEVVEGVIVEEGSVISMGVYIGQSTRIYDRETGEIHYGRVPAGSVVVSGNLPSKDGKYSLYCAVIVKKVDAKTRGKVGINELLRTID</sequence>
<dbReference type="EC" id="2.3.1.117" evidence="1"/>
<dbReference type="EMBL" id="CP000822">
    <property type="protein sequence ID" value="ABV14287.1"/>
    <property type="molecule type" value="Genomic_DNA"/>
</dbReference>
<dbReference type="RefSeq" id="WP_012133993.1">
    <property type="nucleotide sequence ID" value="NC_009792.1"/>
</dbReference>
<dbReference type="SMR" id="A8ALC4"/>
<dbReference type="STRING" id="290338.CKO_03203"/>
<dbReference type="GeneID" id="45136985"/>
<dbReference type="KEGG" id="cko:CKO_03203"/>
<dbReference type="HOGENOM" id="CLU_050859_0_1_6"/>
<dbReference type="OrthoDB" id="9775362at2"/>
<dbReference type="UniPathway" id="UPA00034">
    <property type="reaction ID" value="UER00019"/>
</dbReference>
<dbReference type="Proteomes" id="UP000008148">
    <property type="component" value="Chromosome"/>
</dbReference>
<dbReference type="GO" id="GO:0005737">
    <property type="term" value="C:cytoplasm"/>
    <property type="evidence" value="ECO:0007669"/>
    <property type="project" value="UniProtKB-SubCell"/>
</dbReference>
<dbReference type="GO" id="GO:0008666">
    <property type="term" value="F:2,3,4,5-tetrahydropyridine-2,6-dicarboxylate N-succinyltransferase activity"/>
    <property type="evidence" value="ECO:0007669"/>
    <property type="project" value="UniProtKB-UniRule"/>
</dbReference>
<dbReference type="GO" id="GO:0016779">
    <property type="term" value="F:nucleotidyltransferase activity"/>
    <property type="evidence" value="ECO:0007669"/>
    <property type="project" value="TreeGrafter"/>
</dbReference>
<dbReference type="GO" id="GO:0019877">
    <property type="term" value="P:diaminopimelate biosynthetic process"/>
    <property type="evidence" value="ECO:0007669"/>
    <property type="project" value="UniProtKB-UniRule"/>
</dbReference>
<dbReference type="GO" id="GO:0009089">
    <property type="term" value="P:lysine biosynthetic process via diaminopimelate"/>
    <property type="evidence" value="ECO:0007669"/>
    <property type="project" value="UniProtKB-UniRule"/>
</dbReference>
<dbReference type="CDD" id="cd03350">
    <property type="entry name" value="LbH_THP_succinylT"/>
    <property type="match status" value="1"/>
</dbReference>
<dbReference type="FunFam" id="2.160.10.10:FF:000004">
    <property type="entry name" value="2,3,4,5-tetrahydropyridine-2,6-dicarboxylate N-succinyltransferase"/>
    <property type="match status" value="1"/>
</dbReference>
<dbReference type="Gene3D" id="2.160.10.10">
    <property type="entry name" value="Hexapeptide repeat proteins"/>
    <property type="match status" value="1"/>
</dbReference>
<dbReference type="Gene3D" id="1.10.166.10">
    <property type="entry name" value="Tetrahydrodipicolinate-N-succinyltransferase, N-terminal domain"/>
    <property type="match status" value="1"/>
</dbReference>
<dbReference type="HAMAP" id="MF_00811">
    <property type="entry name" value="DapD"/>
    <property type="match status" value="1"/>
</dbReference>
<dbReference type="InterPro" id="IPR005664">
    <property type="entry name" value="DapD_Trfase_Hexpep_rpt_fam"/>
</dbReference>
<dbReference type="InterPro" id="IPR001451">
    <property type="entry name" value="Hexapep"/>
</dbReference>
<dbReference type="InterPro" id="IPR018357">
    <property type="entry name" value="Hexapep_transf_CS"/>
</dbReference>
<dbReference type="InterPro" id="IPR023180">
    <property type="entry name" value="THP_succinylTrfase_dom1"/>
</dbReference>
<dbReference type="InterPro" id="IPR037133">
    <property type="entry name" value="THP_succinylTrfase_N_sf"/>
</dbReference>
<dbReference type="InterPro" id="IPR011004">
    <property type="entry name" value="Trimer_LpxA-like_sf"/>
</dbReference>
<dbReference type="NCBIfam" id="TIGR00965">
    <property type="entry name" value="dapD"/>
    <property type="match status" value="1"/>
</dbReference>
<dbReference type="NCBIfam" id="NF008808">
    <property type="entry name" value="PRK11830.1"/>
    <property type="match status" value="1"/>
</dbReference>
<dbReference type="PANTHER" id="PTHR19136:SF52">
    <property type="entry name" value="2,3,4,5-TETRAHYDROPYRIDINE-2,6-DICARBOXYLATE N-SUCCINYLTRANSFERASE"/>
    <property type="match status" value="1"/>
</dbReference>
<dbReference type="PANTHER" id="PTHR19136">
    <property type="entry name" value="MOLYBDENUM COFACTOR GUANYLYLTRANSFERASE"/>
    <property type="match status" value="1"/>
</dbReference>
<dbReference type="Pfam" id="PF14602">
    <property type="entry name" value="Hexapep_2"/>
    <property type="match status" value="1"/>
</dbReference>
<dbReference type="Pfam" id="PF14805">
    <property type="entry name" value="THDPS_N_2"/>
    <property type="match status" value="1"/>
</dbReference>
<dbReference type="SUPFAM" id="SSF51161">
    <property type="entry name" value="Trimeric LpxA-like enzymes"/>
    <property type="match status" value="1"/>
</dbReference>
<dbReference type="PROSITE" id="PS00101">
    <property type="entry name" value="HEXAPEP_TRANSFERASES"/>
    <property type="match status" value="1"/>
</dbReference>
<gene>
    <name evidence="1" type="primary">dapD</name>
    <name type="ordered locus">CKO_03203</name>
</gene>
<keyword id="KW-0012">Acyltransferase</keyword>
<keyword id="KW-0028">Amino-acid biosynthesis</keyword>
<keyword id="KW-0963">Cytoplasm</keyword>
<keyword id="KW-0220">Diaminopimelate biosynthesis</keyword>
<keyword id="KW-0457">Lysine biosynthesis</keyword>
<keyword id="KW-1185">Reference proteome</keyword>
<keyword id="KW-0677">Repeat</keyword>
<keyword id="KW-0808">Transferase</keyword>